<keyword id="KW-1003">Cell membrane</keyword>
<keyword id="KW-0444">Lipid biosynthesis</keyword>
<keyword id="KW-0443">Lipid metabolism</keyword>
<keyword id="KW-0472">Membrane</keyword>
<keyword id="KW-0548">Nucleotidyltransferase</keyword>
<keyword id="KW-0594">Phospholipid biosynthesis</keyword>
<keyword id="KW-1208">Phospholipid metabolism</keyword>
<keyword id="KW-1185">Reference proteome</keyword>
<keyword id="KW-0808">Transferase</keyword>
<keyword id="KW-0812">Transmembrane</keyword>
<keyword id="KW-1133">Transmembrane helix</keyword>
<feature type="chain" id="PRO_0000090742" description="Phosphatidate cytidylyltransferase">
    <location>
        <begin position="1"/>
        <end position="312"/>
    </location>
</feature>
<feature type="transmembrane region" description="Helical" evidence="1">
    <location>
        <begin position="37"/>
        <end position="57"/>
    </location>
</feature>
<feature type="transmembrane region" description="Helical" evidence="1">
    <location>
        <begin position="58"/>
        <end position="78"/>
    </location>
</feature>
<feature type="transmembrane region" description="Helical" evidence="1">
    <location>
        <begin position="85"/>
        <end position="105"/>
    </location>
</feature>
<feature type="transmembrane region" description="Helical" evidence="1">
    <location>
        <begin position="110"/>
        <end position="130"/>
    </location>
</feature>
<feature type="transmembrane region" description="Helical" evidence="1">
    <location>
        <begin position="157"/>
        <end position="177"/>
    </location>
</feature>
<feature type="transmembrane region" description="Helical" evidence="1">
    <location>
        <begin position="186"/>
        <end position="206"/>
    </location>
</feature>
<feature type="transmembrane region" description="Helical" evidence="1">
    <location>
        <begin position="223"/>
        <end position="243"/>
    </location>
</feature>
<feature type="transmembrane region" description="Helical" evidence="1">
    <location>
        <begin position="247"/>
        <end position="267"/>
    </location>
</feature>
<feature type="region of interest" description="Disordered" evidence="2">
    <location>
        <begin position="1"/>
        <end position="31"/>
    </location>
</feature>
<dbReference type="EC" id="2.7.7.41"/>
<dbReference type="EMBL" id="AL583922">
    <property type="protein sequence ID" value="CAC30540.1"/>
    <property type="molecule type" value="Genomic_DNA"/>
</dbReference>
<dbReference type="PIR" id="G87107">
    <property type="entry name" value="G87107"/>
</dbReference>
<dbReference type="RefSeq" id="NP_302096.1">
    <property type="nucleotide sequence ID" value="NC_002677.1"/>
</dbReference>
<dbReference type="RefSeq" id="WP_010908417.1">
    <property type="nucleotide sequence ID" value="NC_002677.1"/>
</dbReference>
<dbReference type="SMR" id="Q9CBU1"/>
<dbReference type="STRING" id="272631.gene:17575430"/>
<dbReference type="KEGG" id="mle:ML1589"/>
<dbReference type="PATRIC" id="fig|272631.5.peg.2997"/>
<dbReference type="Leproma" id="ML1589"/>
<dbReference type="eggNOG" id="COG0575">
    <property type="taxonomic scope" value="Bacteria"/>
</dbReference>
<dbReference type="HOGENOM" id="CLU_037294_0_0_11"/>
<dbReference type="OrthoDB" id="9799199at2"/>
<dbReference type="UniPathway" id="UPA00557">
    <property type="reaction ID" value="UER00614"/>
</dbReference>
<dbReference type="Proteomes" id="UP000000806">
    <property type="component" value="Chromosome"/>
</dbReference>
<dbReference type="GO" id="GO:0005886">
    <property type="term" value="C:plasma membrane"/>
    <property type="evidence" value="ECO:0007669"/>
    <property type="project" value="UniProtKB-SubCell"/>
</dbReference>
<dbReference type="GO" id="GO:0004605">
    <property type="term" value="F:phosphatidate cytidylyltransferase activity"/>
    <property type="evidence" value="ECO:0007669"/>
    <property type="project" value="UniProtKB-EC"/>
</dbReference>
<dbReference type="GO" id="GO:0016024">
    <property type="term" value="P:CDP-diacylglycerol biosynthetic process"/>
    <property type="evidence" value="ECO:0007669"/>
    <property type="project" value="UniProtKB-UniPathway"/>
</dbReference>
<dbReference type="InterPro" id="IPR000374">
    <property type="entry name" value="PC_trans"/>
</dbReference>
<dbReference type="PANTHER" id="PTHR46382">
    <property type="entry name" value="PHOSPHATIDATE CYTIDYLYLTRANSFERASE"/>
    <property type="match status" value="1"/>
</dbReference>
<dbReference type="PANTHER" id="PTHR46382:SF1">
    <property type="entry name" value="PHOSPHATIDATE CYTIDYLYLTRANSFERASE"/>
    <property type="match status" value="1"/>
</dbReference>
<dbReference type="Pfam" id="PF01148">
    <property type="entry name" value="CTP_transf_1"/>
    <property type="match status" value="1"/>
</dbReference>
<dbReference type="PROSITE" id="PS01315">
    <property type="entry name" value="CDS"/>
    <property type="match status" value="1"/>
</dbReference>
<sequence length="312" mass="32972">MASTDPGTGTPLDESVPGIKRAMRQSTKNTPRAGRNLPAAIAVGLSIGGVLVATLVFAPRIWVVLCAGAIFVASHEVVRRLREAGYVIPAIPLLIGGQFTVWLTWPYRTVGALAGFGATVVVCMIWRLVMHDNSKQHESREALAGPPVSNYLRDASATVFLAAWVPLFASFAALLVYPKDGAGRVFCLMIAVVASDVGGYTVGVLFGKHPLVPRISPNKSWEGFAGSLVCGTTATILTATFLAGKTPWVGALLSFVLVLTCTLGDLVESQVKRDLGIKDMGRLLPGHGGLMDRLDGVLPSAVVAWTMLTLLP</sequence>
<protein>
    <recommendedName>
        <fullName>Phosphatidate cytidylyltransferase</fullName>
        <ecNumber>2.7.7.41</ecNumber>
    </recommendedName>
    <alternativeName>
        <fullName>CDP-DAG synthase</fullName>
    </alternativeName>
    <alternativeName>
        <fullName>CDP-DG synthase</fullName>
    </alternativeName>
    <alternativeName>
        <fullName>CDP-diacylglycerol synthase</fullName>
        <shortName>CDS</shortName>
    </alternativeName>
    <alternativeName>
        <fullName>CDP-diglyceride pyrophosphorylase</fullName>
    </alternativeName>
    <alternativeName>
        <fullName>CDP-diglyceride synthase</fullName>
    </alternativeName>
    <alternativeName>
        <fullName>CTP:phosphatidate cytidylyltransferase</fullName>
    </alternativeName>
</protein>
<proteinExistence type="inferred from homology"/>
<gene>
    <name type="primary">cdsA</name>
    <name type="ordered locus">ML1589</name>
</gene>
<name>CDSA_MYCLE</name>
<organism>
    <name type="scientific">Mycobacterium leprae (strain TN)</name>
    <dbReference type="NCBI Taxonomy" id="272631"/>
    <lineage>
        <taxon>Bacteria</taxon>
        <taxon>Bacillati</taxon>
        <taxon>Actinomycetota</taxon>
        <taxon>Actinomycetes</taxon>
        <taxon>Mycobacteriales</taxon>
        <taxon>Mycobacteriaceae</taxon>
        <taxon>Mycobacterium</taxon>
    </lineage>
</organism>
<accession>Q9CBU1</accession>
<evidence type="ECO:0000255" key="1"/>
<evidence type="ECO:0000256" key="2">
    <source>
        <dbReference type="SAM" id="MobiDB-lite"/>
    </source>
</evidence>
<evidence type="ECO:0000305" key="3"/>
<reference key="1">
    <citation type="journal article" date="2001" name="Nature">
        <title>Massive gene decay in the leprosy bacillus.</title>
        <authorList>
            <person name="Cole S.T."/>
            <person name="Eiglmeier K."/>
            <person name="Parkhill J."/>
            <person name="James K.D."/>
            <person name="Thomson N.R."/>
            <person name="Wheeler P.R."/>
            <person name="Honore N."/>
            <person name="Garnier T."/>
            <person name="Churcher C.M."/>
            <person name="Harris D.E."/>
            <person name="Mungall K.L."/>
            <person name="Basham D."/>
            <person name="Brown D."/>
            <person name="Chillingworth T."/>
            <person name="Connor R."/>
            <person name="Davies R.M."/>
            <person name="Devlin K."/>
            <person name="Duthoy S."/>
            <person name="Feltwell T."/>
            <person name="Fraser A."/>
            <person name="Hamlin N."/>
            <person name="Holroyd S."/>
            <person name="Hornsby T."/>
            <person name="Jagels K."/>
            <person name="Lacroix C."/>
            <person name="Maclean J."/>
            <person name="Moule S."/>
            <person name="Murphy L.D."/>
            <person name="Oliver K."/>
            <person name="Quail M.A."/>
            <person name="Rajandream M.A."/>
            <person name="Rutherford K.M."/>
            <person name="Rutter S."/>
            <person name="Seeger K."/>
            <person name="Simon S."/>
            <person name="Simmonds M."/>
            <person name="Skelton J."/>
            <person name="Squares R."/>
            <person name="Squares S."/>
            <person name="Stevens K."/>
            <person name="Taylor K."/>
            <person name="Whitehead S."/>
            <person name="Woodward J.R."/>
            <person name="Barrell B.G."/>
        </authorList>
    </citation>
    <scope>NUCLEOTIDE SEQUENCE [LARGE SCALE GENOMIC DNA]</scope>
    <source>
        <strain>TN</strain>
    </source>
</reference>
<comment type="catalytic activity">
    <reaction>
        <text>a 1,2-diacyl-sn-glycero-3-phosphate + CTP + H(+) = a CDP-1,2-diacyl-sn-glycerol + diphosphate</text>
        <dbReference type="Rhea" id="RHEA:16229"/>
        <dbReference type="ChEBI" id="CHEBI:15378"/>
        <dbReference type="ChEBI" id="CHEBI:33019"/>
        <dbReference type="ChEBI" id="CHEBI:37563"/>
        <dbReference type="ChEBI" id="CHEBI:58332"/>
        <dbReference type="ChEBI" id="CHEBI:58608"/>
        <dbReference type="EC" id="2.7.7.41"/>
    </reaction>
</comment>
<comment type="pathway">
    <text>Phospholipid metabolism; CDP-diacylglycerol biosynthesis; CDP-diacylglycerol from sn-glycerol 3-phosphate: step 3/3.</text>
</comment>
<comment type="subcellular location">
    <subcellularLocation>
        <location evidence="3">Cell membrane</location>
        <topology evidence="3">Multi-pass membrane protein</topology>
    </subcellularLocation>
</comment>
<comment type="similarity">
    <text evidence="3">Belongs to the CDS family.</text>
</comment>